<accession>A4KA32</accession>
<proteinExistence type="evidence at protein level"/>
<reference key="1">
    <citation type="journal article" date="2012" name="PLoS ONE">
        <title>Characterization of profilin polymorphism in pollen with a focus on multifunctionality.</title>
        <authorList>
            <person name="Jimenez-Lopez J.C."/>
            <person name="Morales S."/>
            <person name="Castro A.J."/>
            <person name="Volkmann D."/>
            <person name="Rodriguez-Garcia M.I."/>
            <person name="Alche Jde D."/>
        </authorList>
    </citation>
    <scope>NUCLEOTIDE SEQUENCE [MRNA]</scope>
    <scope>POLYMORPHISM</scope>
    <source>
        <strain>cv. Pratense</strain>
    </source>
</reference>
<reference key="2">
    <citation type="journal article" date="2013" name="PLoS ONE">
        <title>Analysis of the effects of polymorphism on pollen profilin structural functionality and the generation of conformational, T- and B-cell epitopes.</title>
        <authorList>
            <person name="Jimenez-Lopez J.C."/>
            <person name="Rodriguez-Garcia M.I."/>
            <person name="Alche J.D."/>
        </authorList>
    </citation>
    <scope>3D-STRUCTURE MODELING</scope>
    <scope>DISULFIDE BOND</scope>
</reference>
<comment type="function">
    <text evidence="1">Binds to actin and affects the structure of the cytoskeleton. At high concentrations, profilin prevents the polymerization of actin, whereas it enhances it at low concentrations (By similarity).</text>
</comment>
<comment type="subunit">
    <text evidence="1">Occurs in many kinds of cells as a complex with monomeric actin in a 1:1 ratio.</text>
</comment>
<comment type="subcellular location">
    <subcellularLocation>
        <location evidence="1">Cytoplasm</location>
        <location evidence="1">Cytoskeleton</location>
    </subcellularLocation>
</comment>
<comment type="PTM">
    <text evidence="1">Phosphorylated by MAP kinases.</text>
</comment>
<comment type="polymorphism">
    <text>Several isoforms of the allergen exist due to polymorphism.</text>
</comment>
<comment type="allergen">
    <text>Causes an allergic reaction in human.</text>
</comment>
<comment type="miscellaneous">
    <text evidence="3">The variability of the residues taking part of IgE-binding epitopes might be responsible of the difference in cross-reactivity among olive pollen cultivars, and between distantly related pollen species, leading to a variable range of allergy reactions among atopic patients.</text>
</comment>
<comment type="similarity">
    <text evidence="2">Belongs to the profilin family.</text>
</comment>
<evidence type="ECO:0000250" key="1"/>
<evidence type="ECO:0000305" key="2"/>
<evidence type="ECO:0000305" key="3">
    <source>
    </source>
</evidence>
<name>PROF5_PHLPR</name>
<protein>
    <recommendedName>
        <fullName>Profilin-5</fullName>
    </recommendedName>
    <alternativeName>
        <fullName>Pollen allergen Phl p 12</fullName>
    </alternativeName>
    <alternativeName>
        <fullName>pollen profilin variant 2</fullName>
    </alternativeName>
    <allergenName>Phl p 12</allergenName>
</protein>
<sequence length="131" mass="14115">MSWQAYVDEHLMCEIEGHHLASAAILGHDGTVWAQSADFPQFKPEEITGIMKDFDEPGHLAPTGMFVAAAKYMVIQGEPGAVIRGKKGAGGITIKKTGQALVVGIYDEPMTPGQCNMVVERLGDYLVKQGL</sequence>
<keyword id="KW-0009">Actin-binding</keyword>
<keyword id="KW-0020">Allergen</keyword>
<keyword id="KW-0963">Cytoplasm</keyword>
<keyword id="KW-0206">Cytoskeleton</keyword>
<keyword id="KW-1015">Disulfide bond</keyword>
<keyword id="KW-0597">Phosphoprotein</keyword>
<feature type="initiator methionine" description="Removed" evidence="1">
    <location>
        <position position="1"/>
    </location>
</feature>
<feature type="chain" id="PRO_0000425059" description="Profilin-5">
    <location>
        <begin position="2"/>
        <end position="131"/>
    </location>
</feature>
<feature type="short sequence motif" description="Involved in PIP2 interaction">
    <location>
        <begin position="81"/>
        <end position="97"/>
    </location>
</feature>
<feature type="modified residue" description="Phosphothreonine" evidence="1">
    <location>
        <position position="111"/>
    </location>
</feature>
<feature type="disulfide bond" evidence="3">
    <location>
        <begin position="13"/>
        <end position="115"/>
    </location>
</feature>
<dbReference type="EMBL" id="DQ663536">
    <property type="protein sequence ID" value="ABG81289.1"/>
    <property type="molecule type" value="mRNA"/>
</dbReference>
<dbReference type="SMR" id="A4KA32"/>
<dbReference type="Allergome" id="553">
    <property type="allergen name" value="Phl p 12"/>
</dbReference>
<dbReference type="GO" id="GO:0005938">
    <property type="term" value="C:cell cortex"/>
    <property type="evidence" value="ECO:0007669"/>
    <property type="project" value="TreeGrafter"/>
</dbReference>
<dbReference type="GO" id="GO:0005856">
    <property type="term" value="C:cytoskeleton"/>
    <property type="evidence" value="ECO:0007669"/>
    <property type="project" value="UniProtKB-SubCell"/>
</dbReference>
<dbReference type="GO" id="GO:0003785">
    <property type="term" value="F:actin monomer binding"/>
    <property type="evidence" value="ECO:0007669"/>
    <property type="project" value="TreeGrafter"/>
</dbReference>
<dbReference type="CDD" id="cd00148">
    <property type="entry name" value="PROF"/>
    <property type="match status" value="1"/>
</dbReference>
<dbReference type="FunFam" id="3.30.450.30:FF:000001">
    <property type="entry name" value="Profilin"/>
    <property type="match status" value="1"/>
</dbReference>
<dbReference type="Gene3D" id="3.30.450.30">
    <property type="entry name" value="Dynein light chain 2a, cytoplasmic"/>
    <property type="match status" value="1"/>
</dbReference>
<dbReference type="InterPro" id="IPR048278">
    <property type="entry name" value="PFN"/>
</dbReference>
<dbReference type="InterPro" id="IPR005455">
    <property type="entry name" value="PFN_euk"/>
</dbReference>
<dbReference type="InterPro" id="IPR036140">
    <property type="entry name" value="PFN_sf"/>
</dbReference>
<dbReference type="InterPro" id="IPR027310">
    <property type="entry name" value="Profilin_CS"/>
</dbReference>
<dbReference type="PANTHER" id="PTHR11604">
    <property type="entry name" value="PROFILIN"/>
    <property type="match status" value="1"/>
</dbReference>
<dbReference type="PANTHER" id="PTHR11604:SF31">
    <property type="entry name" value="PROFILIN"/>
    <property type="match status" value="1"/>
</dbReference>
<dbReference type="Pfam" id="PF00235">
    <property type="entry name" value="Profilin"/>
    <property type="match status" value="1"/>
</dbReference>
<dbReference type="PRINTS" id="PR00392">
    <property type="entry name" value="PROFILIN"/>
</dbReference>
<dbReference type="PRINTS" id="PR01640">
    <property type="entry name" value="PROFILINPLNT"/>
</dbReference>
<dbReference type="SMART" id="SM00392">
    <property type="entry name" value="PROF"/>
    <property type="match status" value="1"/>
</dbReference>
<dbReference type="SUPFAM" id="SSF55770">
    <property type="entry name" value="Profilin (actin-binding protein)"/>
    <property type="match status" value="1"/>
</dbReference>
<dbReference type="PROSITE" id="PS00414">
    <property type="entry name" value="PROFILIN"/>
    <property type="match status" value="1"/>
</dbReference>
<organism>
    <name type="scientific">Phleum pratense</name>
    <name type="common">Common timothy</name>
    <dbReference type="NCBI Taxonomy" id="15957"/>
    <lineage>
        <taxon>Eukaryota</taxon>
        <taxon>Viridiplantae</taxon>
        <taxon>Streptophyta</taxon>
        <taxon>Embryophyta</taxon>
        <taxon>Tracheophyta</taxon>
        <taxon>Spermatophyta</taxon>
        <taxon>Magnoliopsida</taxon>
        <taxon>Liliopsida</taxon>
        <taxon>Poales</taxon>
        <taxon>Poaceae</taxon>
        <taxon>BOP clade</taxon>
        <taxon>Pooideae</taxon>
        <taxon>Poodae</taxon>
        <taxon>Poeae</taxon>
        <taxon>Poeae Chloroplast Group 2 (Poeae type)</taxon>
        <taxon>Poodinae</taxon>
        <taxon>Phleinae</taxon>
        <taxon>Phleum</taxon>
    </lineage>
</organism>